<name>LFTR_ECOSM</name>
<organism>
    <name type="scientific">Escherichia coli (strain SMS-3-5 / SECEC)</name>
    <dbReference type="NCBI Taxonomy" id="439855"/>
    <lineage>
        <taxon>Bacteria</taxon>
        <taxon>Pseudomonadati</taxon>
        <taxon>Pseudomonadota</taxon>
        <taxon>Gammaproteobacteria</taxon>
        <taxon>Enterobacterales</taxon>
        <taxon>Enterobacteriaceae</taxon>
        <taxon>Escherichia</taxon>
    </lineage>
</organism>
<comment type="function">
    <text evidence="1">Functions in the N-end rule pathway of protein degradation where it conjugates Leu, Phe and, less efficiently, Met from aminoacyl-tRNAs to the N-termini of proteins containing an N-terminal arginine or lysine.</text>
</comment>
<comment type="catalytic activity">
    <reaction evidence="1">
        <text>N-terminal L-lysyl-[protein] + L-leucyl-tRNA(Leu) = N-terminal L-leucyl-L-lysyl-[protein] + tRNA(Leu) + H(+)</text>
        <dbReference type="Rhea" id="RHEA:12340"/>
        <dbReference type="Rhea" id="RHEA-COMP:9613"/>
        <dbReference type="Rhea" id="RHEA-COMP:9622"/>
        <dbReference type="Rhea" id="RHEA-COMP:12670"/>
        <dbReference type="Rhea" id="RHEA-COMP:12671"/>
        <dbReference type="ChEBI" id="CHEBI:15378"/>
        <dbReference type="ChEBI" id="CHEBI:65249"/>
        <dbReference type="ChEBI" id="CHEBI:78442"/>
        <dbReference type="ChEBI" id="CHEBI:78494"/>
        <dbReference type="ChEBI" id="CHEBI:133043"/>
        <dbReference type="EC" id="2.3.2.6"/>
    </reaction>
</comment>
<comment type="catalytic activity">
    <reaction evidence="1">
        <text>N-terminal L-arginyl-[protein] + L-leucyl-tRNA(Leu) = N-terminal L-leucyl-L-arginyl-[protein] + tRNA(Leu) + H(+)</text>
        <dbReference type="Rhea" id="RHEA:50416"/>
        <dbReference type="Rhea" id="RHEA-COMP:9613"/>
        <dbReference type="Rhea" id="RHEA-COMP:9622"/>
        <dbReference type="Rhea" id="RHEA-COMP:12672"/>
        <dbReference type="Rhea" id="RHEA-COMP:12673"/>
        <dbReference type="ChEBI" id="CHEBI:15378"/>
        <dbReference type="ChEBI" id="CHEBI:64719"/>
        <dbReference type="ChEBI" id="CHEBI:78442"/>
        <dbReference type="ChEBI" id="CHEBI:78494"/>
        <dbReference type="ChEBI" id="CHEBI:133044"/>
        <dbReference type="EC" id="2.3.2.6"/>
    </reaction>
</comment>
<comment type="catalytic activity">
    <reaction evidence="1">
        <text>L-phenylalanyl-tRNA(Phe) + an N-terminal L-alpha-aminoacyl-[protein] = an N-terminal L-phenylalanyl-L-alpha-aminoacyl-[protein] + tRNA(Phe)</text>
        <dbReference type="Rhea" id="RHEA:43632"/>
        <dbReference type="Rhea" id="RHEA-COMP:9668"/>
        <dbReference type="Rhea" id="RHEA-COMP:9699"/>
        <dbReference type="Rhea" id="RHEA-COMP:10636"/>
        <dbReference type="Rhea" id="RHEA-COMP:10637"/>
        <dbReference type="ChEBI" id="CHEBI:78442"/>
        <dbReference type="ChEBI" id="CHEBI:78531"/>
        <dbReference type="ChEBI" id="CHEBI:78597"/>
        <dbReference type="ChEBI" id="CHEBI:83561"/>
        <dbReference type="EC" id="2.3.2.6"/>
    </reaction>
</comment>
<comment type="subcellular location">
    <subcellularLocation>
        <location evidence="1">Cytoplasm</location>
    </subcellularLocation>
</comment>
<comment type="similarity">
    <text evidence="1">Belongs to the L/F-transferase family.</text>
</comment>
<accession>B1LJX9</accession>
<dbReference type="EC" id="2.3.2.6" evidence="1"/>
<dbReference type="EMBL" id="CP000970">
    <property type="protein sequence ID" value="ACB20112.1"/>
    <property type="molecule type" value="Genomic_DNA"/>
</dbReference>
<dbReference type="RefSeq" id="WP_001241678.1">
    <property type="nucleotide sequence ID" value="NC_010498.1"/>
</dbReference>
<dbReference type="SMR" id="B1LJX9"/>
<dbReference type="GeneID" id="75206174"/>
<dbReference type="KEGG" id="ecm:EcSMS35_2236"/>
<dbReference type="HOGENOM" id="CLU_075045_0_0_6"/>
<dbReference type="Proteomes" id="UP000007011">
    <property type="component" value="Chromosome"/>
</dbReference>
<dbReference type="GO" id="GO:0005737">
    <property type="term" value="C:cytoplasm"/>
    <property type="evidence" value="ECO:0007669"/>
    <property type="project" value="UniProtKB-SubCell"/>
</dbReference>
<dbReference type="GO" id="GO:0008914">
    <property type="term" value="F:leucyl-tRNA--protein transferase activity"/>
    <property type="evidence" value="ECO:0007669"/>
    <property type="project" value="UniProtKB-UniRule"/>
</dbReference>
<dbReference type="GO" id="GO:0030163">
    <property type="term" value="P:protein catabolic process"/>
    <property type="evidence" value="ECO:0007669"/>
    <property type="project" value="UniProtKB-UniRule"/>
</dbReference>
<dbReference type="FunFam" id="3.30.70.3550:FF:000001">
    <property type="entry name" value="Leucyl/phenylalanyl-tRNA--protein transferase"/>
    <property type="match status" value="1"/>
</dbReference>
<dbReference type="FunFam" id="3.40.630.70:FF:000001">
    <property type="entry name" value="Leucyl/phenylalanyl-tRNA--protein transferase"/>
    <property type="match status" value="1"/>
</dbReference>
<dbReference type="Gene3D" id="3.40.630.70">
    <property type="entry name" value="Leucyl/phenylalanyl-tRNA-protein transferase, C-terminal domain"/>
    <property type="match status" value="1"/>
</dbReference>
<dbReference type="Gene3D" id="3.30.70.3550">
    <property type="entry name" value="Leucyl/phenylalanyl-tRNA-protein transferase, N-terminal domain"/>
    <property type="match status" value="1"/>
</dbReference>
<dbReference type="HAMAP" id="MF_00688">
    <property type="entry name" value="Leu_Phe_trans"/>
    <property type="match status" value="1"/>
</dbReference>
<dbReference type="InterPro" id="IPR016181">
    <property type="entry name" value="Acyl_CoA_acyltransferase"/>
</dbReference>
<dbReference type="InterPro" id="IPR004616">
    <property type="entry name" value="Leu/Phe-tRNA_Trfase"/>
</dbReference>
<dbReference type="InterPro" id="IPR042203">
    <property type="entry name" value="Leu/Phe-tRNA_Trfase_C"/>
</dbReference>
<dbReference type="InterPro" id="IPR042221">
    <property type="entry name" value="Leu/Phe-tRNA_Trfase_N"/>
</dbReference>
<dbReference type="NCBIfam" id="TIGR00667">
    <property type="entry name" value="aat"/>
    <property type="match status" value="1"/>
</dbReference>
<dbReference type="PANTHER" id="PTHR30098">
    <property type="entry name" value="LEUCYL/PHENYLALANYL-TRNA--PROTEIN TRANSFERASE"/>
    <property type="match status" value="1"/>
</dbReference>
<dbReference type="PANTHER" id="PTHR30098:SF2">
    <property type="entry name" value="LEUCYL_PHENYLALANYL-TRNA--PROTEIN TRANSFERASE"/>
    <property type="match status" value="1"/>
</dbReference>
<dbReference type="Pfam" id="PF03588">
    <property type="entry name" value="Leu_Phe_trans"/>
    <property type="match status" value="1"/>
</dbReference>
<dbReference type="SUPFAM" id="SSF55729">
    <property type="entry name" value="Acyl-CoA N-acyltransferases (Nat)"/>
    <property type="match status" value="1"/>
</dbReference>
<gene>
    <name evidence="1" type="primary">aat</name>
    <name type="ordered locus">EcSMS35_2236</name>
</gene>
<feature type="chain" id="PRO_1000131925" description="Leucyl/phenylalanyl-tRNA--protein transferase">
    <location>
        <begin position="1"/>
        <end position="234"/>
    </location>
</feature>
<evidence type="ECO:0000255" key="1">
    <source>
        <dbReference type="HAMAP-Rule" id="MF_00688"/>
    </source>
</evidence>
<sequence length="234" mass="26619">MRLVQLSRHSIAFPSPEGALREPNGLLALGGDLSPARLLMAYQRGIFPWFSPGDPILWWSPDPRAVLWPESLHISRSMKRFHKRSPYRVTMNYAFGQVIEGCASDREEGTWITRGVVEAYHRLHELGHAHSIEVWREDELVGGMYGVAQGTLFCGESMFSRMENASKTALLVFCEEFIGHGGKLIDCQVLNDHTASLGACEIPRRDYLNYLNQMRLGRLPNNFWVPRCLFSPQE</sequence>
<reference key="1">
    <citation type="journal article" date="2008" name="J. Bacteriol.">
        <title>Insights into the environmental resistance gene pool from the genome sequence of the multidrug-resistant environmental isolate Escherichia coli SMS-3-5.</title>
        <authorList>
            <person name="Fricke W.F."/>
            <person name="Wright M.S."/>
            <person name="Lindell A.H."/>
            <person name="Harkins D.M."/>
            <person name="Baker-Austin C."/>
            <person name="Ravel J."/>
            <person name="Stepanauskas R."/>
        </authorList>
    </citation>
    <scope>NUCLEOTIDE SEQUENCE [LARGE SCALE GENOMIC DNA]</scope>
    <source>
        <strain>SMS-3-5 / SECEC</strain>
    </source>
</reference>
<proteinExistence type="inferred from homology"/>
<keyword id="KW-0012">Acyltransferase</keyword>
<keyword id="KW-0963">Cytoplasm</keyword>
<keyword id="KW-0808">Transferase</keyword>
<protein>
    <recommendedName>
        <fullName evidence="1">Leucyl/phenylalanyl-tRNA--protein transferase</fullName>
        <ecNumber evidence="1">2.3.2.6</ecNumber>
    </recommendedName>
    <alternativeName>
        <fullName evidence="1">L/F-transferase</fullName>
    </alternativeName>
    <alternativeName>
        <fullName evidence="1">Leucyltransferase</fullName>
    </alternativeName>
    <alternativeName>
        <fullName evidence="1">Phenyalanyltransferase</fullName>
    </alternativeName>
</protein>